<comment type="function">
    <text evidence="1">Could be involved in insertion of integral membrane proteins into the membrane.</text>
</comment>
<comment type="subcellular location">
    <subcellularLocation>
        <location evidence="1">Cell inner membrane</location>
        <topology evidence="1">Peripheral membrane protein</topology>
        <orientation evidence="1">Cytoplasmic side</orientation>
    </subcellularLocation>
</comment>
<comment type="similarity">
    <text evidence="1">Belongs to the UPF0161 family.</text>
</comment>
<name>YIDD_SHEPC</name>
<keyword id="KW-0997">Cell inner membrane</keyword>
<keyword id="KW-1003">Cell membrane</keyword>
<keyword id="KW-0472">Membrane</keyword>
<accession>A4YCM3</accession>
<sequence>MAQTQSPLQWLATTLIRGYQIFISPILGPRCRFNPTCSHYAIEAIKVHGTAKGCWFALKRILKCHPLHPGGSDPVPPKNDRCNK</sequence>
<dbReference type="EMBL" id="CP000681">
    <property type="protein sequence ID" value="ABP77706.1"/>
    <property type="molecule type" value="Genomic_DNA"/>
</dbReference>
<dbReference type="STRING" id="319224.Sputcn32_4003"/>
<dbReference type="KEGG" id="spc:Sputcn32_4003"/>
<dbReference type="eggNOG" id="COG0759">
    <property type="taxonomic scope" value="Bacteria"/>
</dbReference>
<dbReference type="HOGENOM" id="CLU_144811_5_2_6"/>
<dbReference type="GO" id="GO:0005886">
    <property type="term" value="C:plasma membrane"/>
    <property type="evidence" value="ECO:0007669"/>
    <property type="project" value="UniProtKB-SubCell"/>
</dbReference>
<dbReference type="HAMAP" id="MF_00386">
    <property type="entry name" value="UPF0161_YidD"/>
    <property type="match status" value="1"/>
</dbReference>
<dbReference type="InterPro" id="IPR002696">
    <property type="entry name" value="Membr_insert_effic_factor_YidD"/>
</dbReference>
<dbReference type="NCBIfam" id="TIGR00278">
    <property type="entry name" value="membrane protein insertion efficiency factor YidD"/>
    <property type="match status" value="1"/>
</dbReference>
<dbReference type="PANTHER" id="PTHR33383">
    <property type="entry name" value="MEMBRANE PROTEIN INSERTION EFFICIENCY FACTOR-RELATED"/>
    <property type="match status" value="1"/>
</dbReference>
<dbReference type="PANTHER" id="PTHR33383:SF1">
    <property type="entry name" value="MEMBRANE PROTEIN INSERTION EFFICIENCY FACTOR-RELATED"/>
    <property type="match status" value="1"/>
</dbReference>
<dbReference type="Pfam" id="PF01809">
    <property type="entry name" value="YidD"/>
    <property type="match status" value="1"/>
</dbReference>
<dbReference type="SMART" id="SM01234">
    <property type="entry name" value="Haemolytic"/>
    <property type="match status" value="1"/>
</dbReference>
<gene>
    <name type="ordered locus">Sputcn32_4003</name>
</gene>
<proteinExistence type="inferred from homology"/>
<feature type="chain" id="PRO_1000013128" description="Putative membrane protein insertion efficiency factor">
    <location>
        <begin position="1"/>
        <end position="84"/>
    </location>
</feature>
<protein>
    <recommendedName>
        <fullName evidence="1">Putative membrane protein insertion efficiency factor</fullName>
    </recommendedName>
</protein>
<reference key="1">
    <citation type="submission" date="2007-04" db="EMBL/GenBank/DDBJ databases">
        <title>Complete sequence of Shewanella putrefaciens CN-32.</title>
        <authorList>
            <consortium name="US DOE Joint Genome Institute"/>
            <person name="Copeland A."/>
            <person name="Lucas S."/>
            <person name="Lapidus A."/>
            <person name="Barry K."/>
            <person name="Detter J.C."/>
            <person name="Glavina del Rio T."/>
            <person name="Hammon N."/>
            <person name="Israni S."/>
            <person name="Dalin E."/>
            <person name="Tice H."/>
            <person name="Pitluck S."/>
            <person name="Chain P."/>
            <person name="Malfatti S."/>
            <person name="Shin M."/>
            <person name="Vergez L."/>
            <person name="Schmutz J."/>
            <person name="Larimer F."/>
            <person name="Land M."/>
            <person name="Hauser L."/>
            <person name="Kyrpides N."/>
            <person name="Mikhailova N."/>
            <person name="Romine M.F."/>
            <person name="Fredrickson J."/>
            <person name="Tiedje J."/>
            <person name="Richardson P."/>
        </authorList>
    </citation>
    <scope>NUCLEOTIDE SEQUENCE [LARGE SCALE GENOMIC DNA]</scope>
    <source>
        <strain>CN-32 / ATCC BAA-453</strain>
    </source>
</reference>
<evidence type="ECO:0000255" key="1">
    <source>
        <dbReference type="HAMAP-Rule" id="MF_00386"/>
    </source>
</evidence>
<organism>
    <name type="scientific">Shewanella putrefaciens (strain CN-32 / ATCC BAA-453)</name>
    <dbReference type="NCBI Taxonomy" id="319224"/>
    <lineage>
        <taxon>Bacteria</taxon>
        <taxon>Pseudomonadati</taxon>
        <taxon>Pseudomonadota</taxon>
        <taxon>Gammaproteobacteria</taxon>
        <taxon>Alteromonadales</taxon>
        <taxon>Shewanellaceae</taxon>
        <taxon>Shewanella</taxon>
    </lineage>
</organism>